<feature type="chain" id="PRO_1000123150" description="dCTP deaminase">
    <location>
        <begin position="1"/>
        <end position="188"/>
    </location>
</feature>
<feature type="active site" description="Proton donor/acceptor" evidence="1">
    <location>
        <position position="137"/>
    </location>
</feature>
<feature type="binding site" evidence="1">
    <location>
        <begin position="111"/>
        <end position="116"/>
    </location>
    <ligand>
        <name>dCTP</name>
        <dbReference type="ChEBI" id="CHEBI:61481"/>
    </ligand>
</feature>
<feature type="binding site" evidence="1">
    <location>
        <begin position="135"/>
        <end position="137"/>
    </location>
    <ligand>
        <name>dCTP</name>
        <dbReference type="ChEBI" id="CHEBI:61481"/>
    </ligand>
</feature>
<feature type="binding site" evidence="1">
    <location>
        <position position="156"/>
    </location>
    <ligand>
        <name>dCTP</name>
        <dbReference type="ChEBI" id="CHEBI:61481"/>
    </ligand>
</feature>
<feature type="binding site" evidence="1">
    <location>
        <position position="170"/>
    </location>
    <ligand>
        <name>dCTP</name>
        <dbReference type="ChEBI" id="CHEBI:61481"/>
    </ligand>
</feature>
<feature type="binding site" evidence="1">
    <location>
        <position position="180"/>
    </location>
    <ligand>
        <name>dCTP</name>
        <dbReference type="ChEBI" id="CHEBI:61481"/>
    </ligand>
</feature>
<evidence type="ECO:0000255" key="1">
    <source>
        <dbReference type="HAMAP-Rule" id="MF_00146"/>
    </source>
</evidence>
<comment type="function">
    <text evidence="1">Catalyzes the deamination of dCTP to dUTP.</text>
</comment>
<comment type="catalytic activity">
    <reaction evidence="1">
        <text>dCTP + H2O + H(+) = dUTP + NH4(+)</text>
        <dbReference type="Rhea" id="RHEA:22680"/>
        <dbReference type="ChEBI" id="CHEBI:15377"/>
        <dbReference type="ChEBI" id="CHEBI:15378"/>
        <dbReference type="ChEBI" id="CHEBI:28938"/>
        <dbReference type="ChEBI" id="CHEBI:61481"/>
        <dbReference type="ChEBI" id="CHEBI:61555"/>
        <dbReference type="EC" id="3.5.4.13"/>
    </reaction>
</comment>
<comment type="pathway">
    <text evidence="1">Pyrimidine metabolism; dUMP biosynthesis; dUMP from dCTP (dUTP route): step 1/2.</text>
</comment>
<comment type="subunit">
    <text evidence="1">Homotrimer.</text>
</comment>
<comment type="similarity">
    <text evidence="1">Belongs to the dCTP deaminase family.</text>
</comment>
<name>DCD_LARHH</name>
<dbReference type="EC" id="3.5.4.13" evidence="1"/>
<dbReference type="EMBL" id="CP001154">
    <property type="protein sequence ID" value="ACO75832.1"/>
    <property type="molecule type" value="Genomic_DNA"/>
</dbReference>
<dbReference type="RefSeq" id="WP_012698295.1">
    <property type="nucleotide sequence ID" value="NC_012559.1"/>
</dbReference>
<dbReference type="SMR" id="C1D4P1"/>
<dbReference type="STRING" id="557598.LHK_02852"/>
<dbReference type="GeneID" id="75109932"/>
<dbReference type="KEGG" id="lhk:LHK_02852"/>
<dbReference type="eggNOG" id="COG0717">
    <property type="taxonomic scope" value="Bacteria"/>
</dbReference>
<dbReference type="HOGENOM" id="CLU_087476_4_0_4"/>
<dbReference type="UniPathway" id="UPA00610">
    <property type="reaction ID" value="UER00665"/>
</dbReference>
<dbReference type="Proteomes" id="UP000002010">
    <property type="component" value="Chromosome"/>
</dbReference>
<dbReference type="GO" id="GO:0008829">
    <property type="term" value="F:dCTP deaminase activity"/>
    <property type="evidence" value="ECO:0007669"/>
    <property type="project" value="UniProtKB-UniRule"/>
</dbReference>
<dbReference type="GO" id="GO:0000166">
    <property type="term" value="F:nucleotide binding"/>
    <property type="evidence" value="ECO:0007669"/>
    <property type="project" value="UniProtKB-KW"/>
</dbReference>
<dbReference type="GO" id="GO:0006226">
    <property type="term" value="P:dUMP biosynthetic process"/>
    <property type="evidence" value="ECO:0007669"/>
    <property type="project" value="UniProtKB-UniPathway"/>
</dbReference>
<dbReference type="GO" id="GO:0006229">
    <property type="term" value="P:dUTP biosynthetic process"/>
    <property type="evidence" value="ECO:0007669"/>
    <property type="project" value="UniProtKB-UniRule"/>
</dbReference>
<dbReference type="GO" id="GO:0015949">
    <property type="term" value="P:nucleobase-containing small molecule interconversion"/>
    <property type="evidence" value="ECO:0007669"/>
    <property type="project" value="TreeGrafter"/>
</dbReference>
<dbReference type="CDD" id="cd07557">
    <property type="entry name" value="trimeric_dUTPase"/>
    <property type="match status" value="1"/>
</dbReference>
<dbReference type="FunFam" id="2.70.40.10:FF:000001">
    <property type="entry name" value="dCTP deaminase"/>
    <property type="match status" value="1"/>
</dbReference>
<dbReference type="Gene3D" id="2.70.40.10">
    <property type="match status" value="1"/>
</dbReference>
<dbReference type="HAMAP" id="MF_00146">
    <property type="entry name" value="dCTP_deaminase"/>
    <property type="match status" value="1"/>
</dbReference>
<dbReference type="InterPro" id="IPR011962">
    <property type="entry name" value="dCTP_deaminase"/>
</dbReference>
<dbReference type="InterPro" id="IPR036157">
    <property type="entry name" value="dUTPase-like_sf"/>
</dbReference>
<dbReference type="InterPro" id="IPR033704">
    <property type="entry name" value="dUTPase_trimeric"/>
</dbReference>
<dbReference type="NCBIfam" id="TIGR02274">
    <property type="entry name" value="dCTP_deam"/>
    <property type="match status" value="1"/>
</dbReference>
<dbReference type="PANTHER" id="PTHR42680">
    <property type="entry name" value="DCTP DEAMINASE"/>
    <property type="match status" value="1"/>
</dbReference>
<dbReference type="PANTHER" id="PTHR42680:SF3">
    <property type="entry name" value="DCTP DEAMINASE"/>
    <property type="match status" value="1"/>
</dbReference>
<dbReference type="Pfam" id="PF22769">
    <property type="entry name" value="DCD"/>
    <property type="match status" value="1"/>
</dbReference>
<dbReference type="SUPFAM" id="SSF51283">
    <property type="entry name" value="dUTPase-like"/>
    <property type="match status" value="1"/>
</dbReference>
<reference key="1">
    <citation type="journal article" date="2009" name="PLoS Genet.">
        <title>The complete genome and proteome of Laribacter hongkongensis reveal potential mechanisms for adaptations to different temperatures and habitats.</title>
        <authorList>
            <person name="Woo P.C.Y."/>
            <person name="Lau S.K.P."/>
            <person name="Tse H."/>
            <person name="Teng J.L.L."/>
            <person name="Curreem S.O."/>
            <person name="Tsang A.K.L."/>
            <person name="Fan R.Y.Y."/>
            <person name="Wong G.K.M."/>
            <person name="Huang Y."/>
            <person name="Loman N.J."/>
            <person name="Snyder L.A.S."/>
            <person name="Cai J.J."/>
            <person name="Huang J.-D."/>
            <person name="Mak W."/>
            <person name="Pallen M.J."/>
            <person name="Lok S."/>
            <person name="Yuen K.-Y."/>
        </authorList>
    </citation>
    <scope>NUCLEOTIDE SEQUENCE [LARGE SCALE GENOMIC DNA]</scope>
    <source>
        <strain>HLHK9</strain>
    </source>
</reference>
<protein>
    <recommendedName>
        <fullName evidence="1">dCTP deaminase</fullName>
        <ecNumber evidence="1">3.5.4.13</ecNumber>
    </recommendedName>
    <alternativeName>
        <fullName evidence="1">Deoxycytidine triphosphate deaminase</fullName>
    </alternativeName>
</protein>
<gene>
    <name evidence="1" type="primary">dcd</name>
    <name type="ordered locus">LHK_02852</name>
</gene>
<keyword id="KW-0378">Hydrolase</keyword>
<keyword id="KW-0546">Nucleotide metabolism</keyword>
<keyword id="KW-0547">Nucleotide-binding</keyword>
<keyword id="KW-1185">Reference proteome</keyword>
<sequence length="188" mass="21331">MSIKSDKWIRRMAAEYDMISPFEPDLVRQVNGEKVISFGTSSYGYDIRCADEFKVFTNINSTMVDPKNFDEKCFVDVKGEYCIIPPNSFALARTVEYFRIPRNVLTVCLGKSTYARCGIVVNVTPFEPEWEGYVTLEFSNTTPLPAKIYANEGVAQVLFFESDEVCEVSYRDRGGKYMGQVGVTLPRS</sequence>
<proteinExistence type="inferred from homology"/>
<accession>C1D4P1</accession>
<organism>
    <name type="scientific">Laribacter hongkongensis (strain HLHK9)</name>
    <dbReference type="NCBI Taxonomy" id="557598"/>
    <lineage>
        <taxon>Bacteria</taxon>
        <taxon>Pseudomonadati</taxon>
        <taxon>Pseudomonadota</taxon>
        <taxon>Betaproteobacteria</taxon>
        <taxon>Neisseriales</taxon>
        <taxon>Aquaspirillaceae</taxon>
        <taxon>Laribacter</taxon>
    </lineage>
</organism>